<accession>P0A6G1</accession>
<accession>P05380</accession>
<feature type="chain" id="PRO_0000174748" description="Co-chaperonin GroES">
    <location>
        <begin position="1"/>
        <end position="97"/>
    </location>
</feature>
<sequence>MNIRPLHDRVIVKRKEVETKSAGGIVLTGSAAAKSTRGEVLAVGNGRILENGEVKPLDVKVGDIVIFNDGYGVKSEKIDNEEVLIMSESDILAIVEA</sequence>
<name>CH10_ECO57</name>
<dbReference type="EMBL" id="AE005174">
    <property type="protein sequence ID" value="AAG59341.1"/>
    <property type="molecule type" value="Genomic_DNA"/>
</dbReference>
<dbReference type="EMBL" id="BA000007">
    <property type="protein sequence ID" value="BAB38546.1"/>
    <property type="molecule type" value="Genomic_DNA"/>
</dbReference>
<dbReference type="PIR" id="A86110">
    <property type="entry name" value="A86110"/>
</dbReference>
<dbReference type="PIR" id="C91269">
    <property type="entry name" value="C91269"/>
</dbReference>
<dbReference type="RefSeq" id="NP_313150.1">
    <property type="nucleotide sequence ID" value="NC_002695.1"/>
</dbReference>
<dbReference type="RefSeq" id="WP_001026276.1">
    <property type="nucleotide sequence ID" value="NZ_VOAI01000008.1"/>
</dbReference>
<dbReference type="SMR" id="P0A6G1"/>
<dbReference type="STRING" id="155864.Z5747"/>
<dbReference type="GeneID" id="913836"/>
<dbReference type="KEGG" id="ece:Z5747"/>
<dbReference type="KEGG" id="ecs:ECs_5123"/>
<dbReference type="PATRIC" id="fig|386585.9.peg.5354"/>
<dbReference type="eggNOG" id="COG0234">
    <property type="taxonomic scope" value="Bacteria"/>
</dbReference>
<dbReference type="HOGENOM" id="CLU_132825_1_1_6"/>
<dbReference type="OMA" id="EDFLIMR"/>
<dbReference type="Proteomes" id="UP000000558">
    <property type="component" value="Chromosome"/>
</dbReference>
<dbReference type="Proteomes" id="UP000002519">
    <property type="component" value="Chromosome"/>
</dbReference>
<dbReference type="GO" id="GO:0005737">
    <property type="term" value="C:cytoplasm"/>
    <property type="evidence" value="ECO:0007669"/>
    <property type="project" value="UniProtKB-SubCell"/>
</dbReference>
<dbReference type="GO" id="GO:0005524">
    <property type="term" value="F:ATP binding"/>
    <property type="evidence" value="ECO:0007669"/>
    <property type="project" value="InterPro"/>
</dbReference>
<dbReference type="GO" id="GO:0046872">
    <property type="term" value="F:metal ion binding"/>
    <property type="evidence" value="ECO:0007669"/>
    <property type="project" value="TreeGrafter"/>
</dbReference>
<dbReference type="GO" id="GO:0044183">
    <property type="term" value="F:protein folding chaperone"/>
    <property type="evidence" value="ECO:0000269"/>
    <property type="project" value="DisProt"/>
</dbReference>
<dbReference type="GO" id="GO:0051087">
    <property type="term" value="F:protein-folding chaperone binding"/>
    <property type="evidence" value="ECO:0007669"/>
    <property type="project" value="TreeGrafter"/>
</dbReference>
<dbReference type="GO" id="GO:0051082">
    <property type="term" value="F:unfolded protein binding"/>
    <property type="evidence" value="ECO:0007669"/>
    <property type="project" value="TreeGrafter"/>
</dbReference>
<dbReference type="GO" id="GO:0051085">
    <property type="term" value="P:chaperone cofactor-dependent protein refolding"/>
    <property type="evidence" value="ECO:0007669"/>
    <property type="project" value="TreeGrafter"/>
</dbReference>
<dbReference type="CDD" id="cd00320">
    <property type="entry name" value="cpn10"/>
    <property type="match status" value="1"/>
</dbReference>
<dbReference type="DisProt" id="DP00412"/>
<dbReference type="FunFam" id="2.30.33.40:FF:000001">
    <property type="entry name" value="10 kDa chaperonin"/>
    <property type="match status" value="1"/>
</dbReference>
<dbReference type="Gene3D" id="2.30.33.40">
    <property type="entry name" value="GroES chaperonin"/>
    <property type="match status" value="1"/>
</dbReference>
<dbReference type="HAMAP" id="MF_00580">
    <property type="entry name" value="CH10"/>
    <property type="match status" value="1"/>
</dbReference>
<dbReference type="InterPro" id="IPR020818">
    <property type="entry name" value="Chaperonin_GroES"/>
</dbReference>
<dbReference type="InterPro" id="IPR037124">
    <property type="entry name" value="Chaperonin_GroES_sf"/>
</dbReference>
<dbReference type="InterPro" id="IPR018369">
    <property type="entry name" value="Chaprnonin_Cpn10_CS"/>
</dbReference>
<dbReference type="InterPro" id="IPR011032">
    <property type="entry name" value="GroES-like_sf"/>
</dbReference>
<dbReference type="NCBIfam" id="NF001526">
    <property type="entry name" value="PRK00364.1-1"/>
    <property type="match status" value="1"/>
</dbReference>
<dbReference type="NCBIfam" id="NF001527">
    <property type="entry name" value="PRK00364.1-2"/>
    <property type="match status" value="1"/>
</dbReference>
<dbReference type="NCBIfam" id="NF001531">
    <property type="entry name" value="PRK00364.2-2"/>
    <property type="match status" value="1"/>
</dbReference>
<dbReference type="PANTHER" id="PTHR10772">
    <property type="entry name" value="10 KDA HEAT SHOCK PROTEIN"/>
    <property type="match status" value="1"/>
</dbReference>
<dbReference type="PANTHER" id="PTHR10772:SF58">
    <property type="entry name" value="CO-CHAPERONIN GROES"/>
    <property type="match status" value="1"/>
</dbReference>
<dbReference type="Pfam" id="PF00166">
    <property type="entry name" value="Cpn10"/>
    <property type="match status" value="1"/>
</dbReference>
<dbReference type="PRINTS" id="PR00297">
    <property type="entry name" value="CHAPERONIN10"/>
</dbReference>
<dbReference type="SMART" id="SM00883">
    <property type="entry name" value="Cpn10"/>
    <property type="match status" value="1"/>
</dbReference>
<dbReference type="SUPFAM" id="SSF50129">
    <property type="entry name" value="GroES-like"/>
    <property type="match status" value="1"/>
</dbReference>
<dbReference type="PROSITE" id="PS00681">
    <property type="entry name" value="CHAPERONINS_CPN10"/>
    <property type="match status" value="1"/>
</dbReference>
<comment type="function">
    <text evidence="1">Together with the chaperonin GroEL, plays an essential role in assisting protein folding. The GroEL-GroES system forms a nano-cage that allows encapsulation of the non-native substrate proteins and provides a physical environment optimized to promote and accelerate protein folding. GroES binds to the apical surface of the GroEL ring, thereby capping the opening of the GroEL channel.</text>
</comment>
<comment type="subunit">
    <text evidence="1">Heptamer of 7 subunits arranged in a ring. Interacts with the chaperonin GroEL.</text>
</comment>
<comment type="subcellular location">
    <subcellularLocation>
        <location evidence="1">Cytoplasm</location>
    </subcellularLocation>
</comment>
<comment type="similarity">
    <text evidence="1 2">Belongs to the GroES chaperonin family.</text>
</comment>
<gene>
    <name evidence="1" type="primary">groES</name>
    <name evidence="1" type="synonym">groS</name>
    <name type="synonym">mopB</name>
    <name type="ordered locus">Z5747</name>
    <name type="ordered locus">ECs5123</name>
</gene>
<evidence type="ECO:0000255" key="1">
    <source>
        <dbReference type="HAMAP-Rule" id="MF_00580"/>
    </source>
</evidence>
<evidence type="ECO:0000305" key="2"/>
<proteinExistence type="inferred from homology"/>
<reference key="1">
    <citation type="journal article" date="2001" name="Nature">
        <title>Genome sequence of enterohaemorrhagic Escherichia coli O157:H7.</title>
        <authorList>
            <person name="Perna N.T."/>
            <person name="Plunkett G. III"/>
            <person name="Burland V."/>
            <person name="Mau B."/>
            <person name="Glasner J.D."/>
            <person name="Rose D.J."/>
            <person name="Mayhew G.F."/>
            <person name="Evans P.S."/>
            <person name="Gregor J."/>
            <person name="Kirkpatrick H.A."/>
            <person name="Posfai G."/>
            <person name="Hackett J."/>
            <person name="Klink S."/>
            <person name="Boutin A."/>
            <person name="Shao Y."/>
            <person name="Miller L."/>
            <person name="Grotbeck E.J."/>
            <person name="Davis N.W."/>
            <person name="Lim A."/>
            <person name="Dimalanta E.T."/>
            <person name="Potamousis K."/>
            <person name="Apodaca J."/>
            <person name="Anantharaman T.S."/>
            <person name="Lin J."/>
            <person name="Yen G."/>
            <person name="Schwartz D.C."/>
            <person name="Welch R.A."/>
            <person name="Blattner F.R."/>
        </authorList>
    </citation>
    <scope>NUCLEOTIDE SEQUENCE [LARGE SCALE GENOMIC DNA]</scope>
    <source>
        <strain>O157:H7 / EDL933 / ATCC 700927 / EHEC</strain>
    </source>
</reference>
<reference key="2">
    <citation type="journal article" date="2001" name="DNA Res.">
        <title>Complete genome sequence of enterohemorrhagic Escherichia coli O157:H7 and genomic comparison with a laboratory strain K-12.</title>
        <authorList>
            <person name="Hayashi T."/>
            <person name="Makino K."/>
            <person name="Ohnishi M."/>
            <person name="Kurokawa K."/>
            <person name="Ishii K."/>
            <person name="Yokoyama K."/>
            <person name="Han C.-G."/>
            <person name="Ohtsubo E."/>
            <person name="Nakayama K."/>
            <person name="Murata T."/>
            <person name="Tanaka M."/>
            <person name="Tobe T."/>
            <person name="Iida T."/>
            <person name="Takami H."/>
            <person name="Honda T."/>
            <person name="Sasakawa C."/>
            <person name="Ogasawara N."/>
            <person name="Yasunaga T."/>
            <person name="Kuhara S."/>
            <person name="Shiba T."/>
            <person name="Hattori M."/>
            <person name="Shinagawa H."/>
        </authorList>
    </citation>
    <scope>NUCLEOTIDE SEQUENCE [LARGE SCALE GENOMIC DNA]</scope>
    <source>
        <strain>O157:H7 / Sakai / RIMD 0509952 / EHEC</strain>
    </source>
</reference>
<protein>
    <recommendedName>
        <fullName evidence="1">Co-chaperonin GroES</fullName>
    </recommendedName>
    <alternativeName>
        <fullName evidence="1">10 kDa chaperonin</fullName>
    </alternativeName>
    <alternativeName>
        <fullName evidence="1">Chaperonin-10</fullName>
        <shortName evidence="1">Cpn10</shortName>
    </alternativeName>
</protein>
<organism>
    <name type="scientific">Escherichia coli O157:H7</name>
    <dbReference type="NCBI Taxonomy" id="83334"/>
    <lineage>
        <taxon>Bacteria</taxon>
        <taxon>Pseudomonadati</taxon>
        <taxon>Pseudomonadota</taxon>
        <taxon>Gammaproteobacteria</taxon>
        <taxon>Enterobacterales</taxon>
        <taxon>Enterobacteriaceae</taxon>
        <taxon>Escherichia</taxon>
    </lineage>
</organism>
<keyword id="KW-0143">Chaperone</keyword>
<keyword id="KW-0963">Cytoplasm</keyword>
<keyword id="KW-1185">Reference proteome</keyword>